<evidence type="ECO:0000255" key="1">
    <source>
        <dbReference type="HAMAP-Rule" id="MF_01102"/>
    </source>
</evidence>
<sequence length="637" mass="67972">MPIDPARLAFTDDGTPCSAAFGDVYHARGGGLEQARFVFIAGNGLPARWQGREHFAILETGFGFGLNFLATWDAWRADPKRCERLHFVSVERHPFTREDLATLHARWPELAPLAAELADHWPTLTPGMHRLHLNRGRVVLTLLFGDARELLPRLECGADAFFLDGFSPACNPELWSAALLAELGRLAASGATLATWSVSGDVRRALAAAGFDCEKAPGFDGKRQMCRGRHRDVGTGPAPAAAAARHALVIGAGLAGSSTAERLAARGWHVDVIDAADGPGEGASGNLTGVLRPLPSLDDNRLARITRAGALYGLHHLRQLTEAGLPVRWDACGVLHLARDPVHEDKQRRVVEAHRPPSDYLRFVERDEASTLAGWPLPVGGWWFPQGAWVSPPSLCAANLMTHPDLIRCHFGRAMQRLEASADGWTAFDADGKAIASAPVAVLANGVGIRAVPQAAALPVRSARGQVTHFPAAAGSPPNVVVCRLGYVAPALDGVRSAGATFSVDDDEPALRDADQRENLAKLEFILPGYAAAVDTAALAGRVGFRPASPDRLPMVGEVPAVLRADRATPLAQIPRHPGLYAVAGFGARGLVWASLAAELLASHIAGEPLPLERELVDALDPARYLLRPARGMTREG</sequence>
<protein>
    <recommendedName>
        <fullName evidence="1">tRNA 5-methylaminomethyl-2-thiouridine biosynthesis bifunctional protein MnmC</fullName>
        <shortName evidence="1">tRNA mnm(5)s(2)U biosynthesis bifunctional protein</shortName>
    </recommendedName>
    <domain>
        <recommendedName>
            <fullName evidence="1">tRNA (mnm(5)s(2)U34)-methyltransferase</fullName>
            <ecNumber evidence="1">2.1.1.61</ecNumber>
        </recommendedName>
    </domain>
    <domain>
        <recommendedName>
            <fullName evidence="1">FAD-dependent cmnm(5)s(2)U34 oxidoreductase</fullName>
            <ecNumber evidence="1">1.5.-.-</ecNumber>
        </recommendedName>
    </domain>
</protein>
<name>MNMC_AROAE</name>
<feature type="chain" id="PRO_0000347942" description="tRNA 5-methylaminomethyl-2-thiouridine biosynthesis bifunctional protein MnmC">
    <location>
        <begin position="1"/>
        <end position="637"/>
    </location>
</feature>
<feature type="region of interest" description="tRNA (mnm(5)s(2)U34)-methyltransferase">
    <location>
        <begin position="1"/>
        <end position="231"/>
    </location>
</feature>
<feature type="region of interest" description="FAD-dependent cmnm(5)s(2)U34 oxidoreductase">
    <location>
        <begin position="250"/>
        <end position="637"/>
    </location>
</feature>
<organism>
    <name type="scientific">Aromatoleum aromaticum (strain DSM 19018 / LMG 30748 / EbN1)</name>
    <name type="common">Azoarcus sp. (strain EbN1)</name>
    <dbReference type="NCBI Taxonomy" id="76114"/>
    <lineage>
        <taxon>Bacteria</taxon>
        <taxon>Pseudomonadati</taxon>
        <taxon>Pseudomonadota</taxon>
        <taxon>Betaproteobacteria</taxon>
        <taxon>Rhodocyclales</taxon>
        <taxon>Rhodocyclaceae</taxon>
        <taxon>Aromatoleum</taxon>
    </lineage>
</organism>
<accession>Q5NY30</accession>
<comment type="function">
    <text evidence="1">Catalyzes the last two steps in the biosynthesis of 5-methylaminomethyl-2-thiouridine (mnm(5)s(2)U) at the wobble position (U34) in tRNA. Catalyzes the FAD-dependent demodification of cmnm(5)s(2)U34 to nm(5)s(2)U34, followed by the transfer of a methyl group from S-adenosyl-L-methionine to nm(5)s(2)U34, to form mnm(5)s(2)U34.</text>
</comment>
<comment type="catalytic activity">
    <reaction evidence="1">
        <text>5-aminomethyl-2-thiouridine(34) in tRNA + S-adenosyl-L-methionine = 5-methylaminomethyl-2-thiouridine(34) in tRNA + S-adenosyl-L-homocysteine + H(+)</text>
        <dbReference type="Rhea" id="RHEA:19569"/>
        <dbReference type="Rhea" id="RHEA-COMP:10195"/>
        <dbReference type="Rhea" id="RHEA-COMP:10197"/>
        <dbReference type="ChEBI" id="CHEBI:15378"/>
        <dbReference type="ChEBI" id="CHEBI:57856"/>
        <dbReference type="ChEBI" id="CHEBI:59789"/>
        <dbReference type="ChEBI" id="CHEBI:74454"/>
        <dbReference type="ChEBI" id="CHEBI:74455"/>
        <dbReference type="EC" id="2.1.1.61"/>
    </reaction>
</comment>
<comment type="cofactor">
    <cofactor evidence="1">
        <name>FAD</name>
        <dbReference type="ChEBI" id="CHEBI:57692"/>
    </cofactor>
</comment>
<comment type="subcellular location">
    <subcellularLocation>
        <location evidence="1">Cytoplasm</location>
    </subcellularLocation>
</comment>
<comment type="similarity">
    <text evidence="1">In the N-terminal section; belongs to the methyltransferase superfamily. tRNA (mnm(5)s(2)U34)-methyltransferase family.</text>
</comment>
<comment type="similarity">
    <text evidence="1">In the C-terminal section; belongs to the DAO family.</text>
</comment>
<reference key="1">
    <citation type="journal article" date="2005" name="Arch. Microbiol.">
        <title>The genome sequence of an anaerobic aromatic-degrading denitrifying bacterium, strain EbN1.</title>
        <authorList>
            <person name="Rabus R."/>
            <person name="Kube M."/>
            <person name="Heider J."/>
            <person name="Beck A."/>
            <person name="Heitmann K."/>
            <person name="Widdel F."/>
            <person name="Reinhardt R."/>
        </authorList>
    </citation>
    <scope>NUCLEOTIDE SEQUENCE [LARGE SCALE GENOMIC DNA]</scope>
    <source>
        <strain>DSM 19018 / LMG 30748 / EbN1</strain>
    </source>
</reference>
<proteinExistence type="inferred from homology"/>
<gene>
    <name evidence="1" type="primary">mnmC</name>
    <name type="ordered locus">AZOSEA39090</name>
    <name type="ORF">ebA6842</name>
</gene>
<keyword id="KW-0963">Cytoplasm</keyword>
<keyword id="KW-0274">FAD</keyword>
<keyword id="KW-0285">Flavoprotein</keyword>
<keyword id="KW-0489">Methyltransferase</keyword>
<keyword id="KW-0511">Multifunctional enzyme</keyword>
<keyword id="KW-0560">Oxidoreductase</keyword>
<keyword id="KW-1185">Reference proteome</keyword>
<keyword id="KW-0949">S-adenosyl-L-methionine</keyword>
<keyword id="KW-0808">Transferase</keyword>
<keyword id="KW-0819">tRNA processing</keyword>
<dbReference type="EC" id="2.1.1.61" evidence="1"/>
<dbReference type="EC" id="1.5.-.-" evidence="1"/>
<dbReference type="EMBL" id="CR555306">
    <property type="protein sequence ID" value="CAI10034.1"/>
    <property type="molecule type" value="Genomic_DNA"/>
</dbReference>
<dbReference type="RefSeq" id="WP_011239679.1">
    <property type="nucleotide sequence ID" value="NC_006513.1"/>
</dbReference>
<dbReference type="SMR" id="Q5NY30"/>
<dbReference type="STRING" id="76114.ebA6842"/>
<dbReference type="KEGG" id="eba:ebA6842"/>
<dbReference type="eggNOG" id="COG0665">
    <property type="taxonomic scope" value="Bacteria"/>
</dbReference>
<dbReference type="eggNOG" id="COG4121">
    <property type="taxonomic scope" value="Bacteria"/>
</dbReference>
<dbReference type="HOGENOM" id="CLU_022427_1_0_4"/>
<dbReference type="OrthoDB" id="9786494at2"/>
<dbReference type="Proteomes" id="UP000006552">
    <property type="component" value="Chromosome"/>
</dbReference>
<dbReference type="GO" id="GO:0005737">
    <property type="term" value="C:cytoplasm"/>
    <property type="evidence" value="ECO:0007669"/>
    <property type="project" value="UniProtKB-SubCell"/>
</dbReference>
<dbReference type="GO" id="GO:0050660">
    <property type="term" value="F:flavin adenine dinucleotide binding"/>
    <property type="evidence" value="ECO:0007669"/>
    <property type="project" value="UniProtKB-UniRule"/>
</dbReference>
<dbReference type="GO" id="GO:0016645">
    <property type="term" value="F:oxidoreductase activity, acting on the CH-NH group of donors"/>
    <property type="evidence" value="ECO:0007669"/>
    <property type="project" value="InterPro"/>
</dbReference>
<dbReference type="GO" id="GO:0004808">
    <property type="term" value="F:tRNA (5-methylaminomethyl-2-thiouridylate)(34)-methyltransferase activity"/>
    <property type="evidence" value="ECO:0007669"/>
    <property type="project" value="UniProtKB-EC"/>
</dbReference>
<dbReference type="GO" id="GO:0032259">
    <property type="term" value="P:methylation"/>
    <property type="evidence" value="ECO:0007669"/>
    <property type="project" value="UniProtKB-KW"/>
</dbReference>
<dbReference type="GO" id="GO:0002098">
    <property type="term" value="P:tRNA wobble uridine modification"/>
    <property type="evidence" value="ECO:0007669"/>
    <property type="project" value="TreeGrafter"/>
</dbReference>
<dbReference type="Gene3D" id="3.30.9.10">
    <property type="entry name" value="D-Amino Acid Oxidase, subunit A, domain 2"/>
    <property type="match status" value="1"/>
</dbReference>
<dbReference type="Gene3D" id="3.50.50.60">
    <property type="entry name" value="FAD/NAD(P)-binding domain"/>
    <property type="match status" value="1"/>
</dbReference>
<dbReference type="Gene3D" id="3.40.50.150">
    <property type="entry name" value="Vaccinia Virus protein VP39"/>
    <property type="match status" value="1"/>
</dbReference>
<dbReference type="HAMAP" id="MF_01102">
    <property type="entry name" value="MnmC"/>
    <property type="match status" value="1"/>
</dbReference>
<dbReference type="InterPro" id="IPR006076">
    <property type="entry name" value="FAD-dep_OxRdtase"/>
</dbReference>
<dbReference type="InterPro" id="IPR036188">
    <property type="entry name" value="FAD/NAD-bd_sf"/>
</dbReference>
<dbReference type="InterPro" id="IPR008471">
    <property type="entry name" value="MnmC-like_methylTransf"/>
</dbReference>
<dbReference type="InterPro" id="IPR029063">
    <property type="entry name" value="SAM-dependent_MTases_sf"/>
</dbReference>
<dbReference type="InterPro" id="IPR023032">
    <property type="entry name" value="tRNA_MAMT_biosynth_bifunc_MnmC"/>
</dbReference>
<dbReference type="InterPro" id="IPR047785">
    <property type="entry name" value="tRNA_MNMC2"/>
</dbReference>
<dbReference type="InterPro" id="IPR017610">
    <property type="entry name" value="tRNA_S-uridine_synth_MnmC_C"/>
</dbReference>
<dbReference type="NCBIfam" id="TIGR03197">
    <property type="entry name" value="MnmC_Cterm"/>
    <property type="match status" value="1"/>
</dbReference>
<dbReference type="NCBIfam" id="NF002481">
    <property type="entry name" value="PRK01747.1-2"/>
    <property type="match status" value="1"/>
</dbReference>
<dbReference type="NCBIfam" id="NF002483">
    <property type="entry name" value="PRK01747.1-4"/>
    <property type="match status" value="1"/>
</dbReference>
<dbReference type="NCBIfam" id="NF033855">
    <property type="entry name" value="tRNA_MNMC2"/>
    <property type="match status" value="1"/>
</dbReference>
<dbReference type="PANTHER" id="PTHR13847">
    <property type="entry name" value="SARCOSINE DEHYDROGENASE-RELATED"/>
    <property type="match status" value="1"/>
</dbReference>
<dbReference type="PANTHER" id="PTHR13847:SF283">
    <property type="entry name" value="TRNA 5-METHYLAMINOMETHYL-2-THIOURIDINE BIOSYNTHESIS BIFUNCTIONAL PROTEIN MNMC"/>
    <property type="match status" value="1"/>
</dbReference>
<dbReference type="Pfam" id="PF01266">
    <property type="entry name" value="DAO"/>
    <property type="match status" value="1"/>
</dbReference>
<dbReference type="Pfam" id="PF05430">
    <property type="entry name" value="Methyltransf_30"/>
    <property type="match status" value="1"/>
</dbReference>
<dbReference type="SUPFAM" id="SSF54373">
    <property type="entry name" value="FAD-linked reductases, C-terminal domain"/>
    <property type="match status" value="1"/>
</dbReference>
<dbReference type="SUPFAM" id="SSF51905">
    <property type="entry name" value="FAD/NAD(P)-binding domain"/>
    <property type="match status" value="1"/>
</dbReference>